<evidence type="ECO:0000256" key="1">
    <source>
        <dbReference type="SAM" id="MobiDB-lite"/>
    </source>
</evidence>
<evidence type="ECO:0000305" key="2"/>
<accession>Q9Z7G3</accession>
<dbReference type="EMBL" id="AE001363">
    <property type="protein sequence ID" value="AAD18881.1"/>
    <property type="molecule type" value="Genomic_DNA"/>
</dbReference>
<dbReference type="EMBL" id="AE002161">
    <property type="protein sequence ID" value="AAF37900.1"/>
    <property type="molecule type" value="Genomic_DNA"/>
</dbReference>
<dbReference type="EMBL" id="BA000008">
    <property type="protein sequence ID" value="BAA98949.1"/>
    <property type="molecule type" value="Genomic_DNA"/>
</dbReference>
<dbReference type="EMBL" id="AE009440">
    <property type="protein sequence ID" value="AAP98699.1"/>
    <property type="status" value="ALT_INIT"/>
    <property type="molecule type" value="Genomic_DNA"/>
</dbReference>
<dbReference type="PIR" id="C86583">
    <property type="entry name" value="C86583"/>
</dbReference>
<dbReference type="PIR" id="D72040">
    <property type="entry name" value="D72040"/>
</dbReference>
<dbReference type="RefSeq" id="NP_224938.1">
    <property type="nucleotide sequence ID" value="NC_000922.1"/>
</dbReference>
<dbReference type="RefSeq" id="WP_010883380.1">
    <property type="nucleotide sequence ID" value="NZ_LN847257.1"/>
</dbReference>
<dbReference type="SMR" id="Q9Z7G3"/>
<dbReference type="STRING" id="406984.CPK_ORF00148"/>
<dbReference type="GeneID" id="45050797"/>
<dbReference type="KEGG" id="cpa:CP_0003"/>
<dbReference type="KEGG" id="cpj:CPj0742"/>
<dbReference type="KEGG" id="cpn:CPn_0742"/>
<dbReference type="KEGG" id="cpt:CpB0770"/>
<dbReference type="PATRIC" id="fig|115713.3.peg.818"/>
<dbReference type="HOGENOM" id="CLU_1793032_0_0_0"/>
<dbReference type="OrthoDB" id="18081at2"/>
<dbReference type="Proteomes" id="UP000000583">
    <property type="component" value="Chromosome"/>
</dbReference>
<dbReference type="Proteomes" id="UP000000801">
    <property type="component" value="Chromosome"/>
</dbReference>
<protein>
    <recommendedName>
        <fullName>Protein CPn_0742/CP_0003/CPj0742/CpB0770</fullName>
    </recommendedName>
</protein>
<gene>
    <name type="ordered locus">CPn_0742</name>
    <name type="ordered locus">CP_0003</name>
    <name type="ordered locus">CPj0742</name>
    <name type="ordered locus">CpB0770</name>
</gene>
<feature type="chain" id="PRO_0000218425" description="Protein CPn_0742/CP_0003/CPj0742/CpB0770">
    <location>
        <begin position="1"/>
        <end position="142"/>
    </location>
</feature>
<feature type="region of interest" description="Disordered" evidence="1">
    <location>
        <begin position="115"/>
        <end position="142"/>
    </location>
</feature>
<feature type="compositionally biased region" description="Basic residues" evidence="1">
    <location>
        <begin position="124"/>
        <end position="142"/>
    </location>
</feature>
<comment type="similarity">
    <text evidence="2">Belongs to the chlamydial CPn_0742/CT_635/TC_0003 family.</text>
</comment>
<comment type="sequence caution" evidence="2">
    <conflict type="erroneous initiation">
        <sequence resource="EMBL-CDS" id="AAP98699"/>
    </conflict>
</comment>
<name>Y742_CHLPN</name>
<reference key="1">
    <citation type="journal article" date="1999" name="Nat. Genet.">
        <title>Comparative genomes of Chlamydia pneumoniae and C. trachomatis.</title>
        <authorList>
            <person name="Kalman S."/>
            <person name="Mitchell W.P."/>
            <person name="Marathe R."/>
            <person name="Lammel C.J."/>
            <person name="Fan J."/>
            <person name="Hyman R.W."/>
            <person name="Olinger L."/>
            <person name="Grimwood J."/>
            <person name="Davis R.W."/>
            <person name="Stephens R.S."/>
        </authorList>
    </citation>
    <scope>NUCLEOTIDE SEQUENCE [LARGE SCALE GENOMIC DNA]</scope>
    <source>
        <strain>CWL029</strain>
    </source>
</reference>
<reference key="2">
    <citation type="journal article" date="2000" name="Nucleic Acids Res.">
        <title>Genome sequences of Chlamydia trachomatis MoPn and Chlamydia pneumoniae AR39.</title>
        <authorList>
            <person name="Read T.D."/>
            <person name="Brunham R.C."/>
            <person name="Shen C."/>
            <person name="Gill S.R."/>
            <person name="Heidelberg J.F."/>
            <person name="White O."/>
            <person name="Hickey E.K."/>
            <person name="Peterson J.D."/>
            <person name="Utterback T.R."/>
            <person name="Berry K.J."/>
            <person name="Bass S."/>
            <person name="Linher K.D."/>
            <person name="Weidman J.F."/>
            <person name="Khouri H.M."/>
            <person name="Craven B."/>
            <person name="Bowman C."/>
            <person name="Dodson R.J."/>
            <person name="Gwinn M.L."/>
            <person name="Nelson W.C."/>
            <person name="DeBoy R.T."/>
            <person name="Kolonay J.F."/>
            <person name="McClarty G."/>
            <person name="Salzberg S.L."/>
            <person name="Eisen J.A."/>
            <person name="Fraser C.M."/>
        </authorList>
    </citation>
    <scope>NUCLEOTIDE SEQUENCE [LARGE SCALE GENOMIC DNA]</scope>
    <source>
        <strain>AR39</strain>
    </source>
</reference>
<reference key="3">
    <citation type="journal article" date="2000" name="Nucleic Acids Res.">
        <title>Comparison of whole genome sequences of Chlamydia pneumoniae J138 from Japan and CWL029 from USA.</title>
        <authorList>
            <person name="Shirai M."/>
            <person name="Hirakawa H."/>
            <person name="Kimoto M."/>
            <person name="Tabuchi M."/>
            <person name="Kishi F."/>
            <person name="Ouchi K."/>
            <person name="Shiba T."/>
            <person name="Ishii K."/>
            <person name="Hattori M."/>
            <person name="Kuhara S."/>
            <person name="Nakazawa T."/>
        </authorList>
    </citation>
    <scope>NUCLEOTIDE SEQUENCE [LARGE SCALE GENOMIC DNA]</scope>
    <source>
        <strain>J138</strain>
    </source>
</reference>
<reference key="4">
    <citation type="submission" date="2002-05" db="EMBL/GenBank/DDBJ databases">
        <title>The genome sequence of Chlamydia pneumoniae TW183 and comparison with other Chlamydia strains based on whole genome sequence analysis.</title>
        <authorList>
            <person name="Geng M.M."/>
            <person name="Schuhmacher A."/>
            <person name="Muehldorfer I."/>
            <person name="Bensch K.W."/>
            <person name="Schaefer K.P."/>
            <person name="Schneider S."/>
            <person name="Pohl T."/>
            <person name="Essig A."/>
            <person name="Marre R."/>
            <person name="Melchers K."/>
        </authorList>
    </citation>
    <scope>NUCLEOTIDE SEQUENCE [LARGE SCALE GENOMIC DNA]</scope>
    <source>
        <strain>TW-183</strain>
    </source>
</reference>
<sequence length="142" mass="16478">MNSKSAQKIIDSIKQILTIYNIDFDPSFGSSLSSDSDADYEYLITKTQEKIQELDKRAQEILTQTGMSKEQMEVFANNPDNFSPEEWLALEKVRSSCDEYRKETENLINEITLDLHPTKESKRPKQKLSSTKKNKKKNWIPL</sequence>
<organism>
    <name type="scientific">Chlamydia pneumoniae</name>
    <name type="common">Chlamydophila pneumoniae</name>
    <dbReference type="NCBI Taxonomy" id="83558"/>
    <lineage>
        <taxon>Bacteria</taxon>
        <taxon>Pseudomonadati</taxon>
        <taxon>Chlamydiota</taxon>
        <taxon>Chlamydiia</taxon>
        <taxon>Chlamydiales</taxon>
        <taxon>Chlamydiaceae</taxon>
        <taxon>Chlamydia/Chlamydophila group</taxon>
        <taxon>Chlamydia</taxon>
    </lineage>
</organism>
<proteinExistence type="inferred from homology"/>